<sequence length="389" mass="43908">MGYQAFTVQDAIERVRTLGLIGNEPVTAEEIGDGNLNLVFRIQAGEKRLILKQALPYAKVVGESWPLSLERAWIEQSALKEFAKVAVPFVPHVYHASKEEAFTVMEDLSHLTIVRGGLLEGEKYPLLAEHIGSYLARTLFYTSDFAVGPVAKKQIARQYYNPDLCDITEKLIFTDPFYDAETNAIEAGLEAEVDRIWNDAELKREVAKLEALFITKGDALLHGDLHTGSIFASAEETKVIDPEFAFYGPFGFDVGQFIAHLFFAAYPDYDRLRDERIKDIDTFWLTFASTFKALWEREAVEPFRKADGLVDDVLSTILQDALGFAGCELIRRTIGLALVADLEQISDSTVRLERKRHALRLGAALIKRRTECKTFTDLRNFDVTEELSR</sequence>
<proteinExistence type="inferred from homology"/>
<reference key="1">
    <citation type="submission" date="2008-04" db="EMBL/GenBank/DDBJ databases">
        <title>Complete sequence of chromosome of Exiguobacterium sibiricum 255-15.</title>
        <authorList>
            <consortium name="US DOE Joint Genome Institute"/>
            <person name="Copeland A."/>
            <person name="Lucas S."/>
            <person name="Lapidus A."/>
            <person name="Glavina del Rio T."/>
            <person name="Dalin E."/>
            <person name="Tice H."/>
            <person name="Bruce D."/>
            <person name="Goodwin L."/>
            <person name="Pitluck S."/>
            <person name="Kiss H."/>
            <person name="Chertkov O."/>
            <person name="Monk C."/>
            <person name="Brettin T."/>
            <person name="Detter J.C."/>
            <person name="Han C."/>
            <person name="Kuske C.R."/>
            <person name="Schmutz J."/>
            <person name="Larimer F."/>
            <person name="Land M."/>
            <person name="Hauser L."/>
            <person name="Kyrpides N."/>
            <person name="Mikhailova N."/>
            <person name="Vishnivetskaya T."/>
            <person name="Rodrigues D.F."/>
            <person name="Gilichinsky D."/>
            <person name="Tiedje J."/>
            <person name="Richardson P."/>
        </authorList>
    </citation>
    <scope>NUCLEOTIDE SEQUENCE [LARGE SCALE GENOMIC DNA]</scope>
    <source>
        <strain>DSM 17290 / CCUG 55495 / CIP 109462 / JCM 13490 / 255-15</strain>
    </source>
</reference>
<feature type="chain" id="PRO_0000357343" description="Methylthioribose kinase">
    <location>
        <begin position="1"/>
        <end position="389"/>
    </location>
</feature>
<feature type="binding site" evidence="1">
    <location>
        <position position="37"/>
    </location>
    <ligand>
        <name>ATP</name>
        <dbReference type="ChEBI" id="CHEBI:30616"/>
    </ligand>
</feature>
<feature type="binding site" evidence="1">
    <location>
        <position position="52"/>
    </location>
    <ligand>
        <name>ATP</name>
        <dbReference type="ChEBI" id="CHEBI:30616"/>
    </ligand>
</feature>
<feature type="binding site" evidence="1">
    <location>
        <begin position="106"/>
        <end position="108"/>
    </location>
    <ligand>
        <name>ATP</name>
        <dbReference type="ChEBI" id="CHEBI:30616"/>
    </ligand>
</feature>
<feature type="binding site" evidence="1">
    <location>
        <position position="224"/>
    </location>
    <ligand>
        <name>substrate</name>
    </ligand>
</feature>
<feature type="binding site" evidence="1">
    <location>
        <begin position="241"/>
        <end position="243"/>
    </location>
    <ligand>
        <name>ATP</name>
        <dbReference type="ChEBI" id="CHEBI:30616"/>
    </ligand>
</feature>
<feature type="binding site" evidence="1">
    <location>
        <position position="331"/>
    </location>
    <ligand>
        <name>substrate</name>
    </ligand>
</feature>
<protein>
    <recommendedName>
        <fullName evidence="1">Methylthioribose kinase</fullName>
        <shortName evidence="1">MTR kinase</shortName>
        <ecNumber evidence="1">2.7.1.100</ecNumber>
    </recommendedName>
</protein>
<organism>
    <name type="scientific">Exiguobacterium sibiricum (strain DSM 17290 / CCUG 55495 / CIP 109462 / JCM 13490 / 255-15)</name>
    <dbReference type="NCBI Taxonomy" id="262543"/>
    <lineage>
        <taxon>Bacteria</taxon>
        <taxon>Bacillati</taxon>
        <taxon>Bacillota</taxon>
        <taxon>Bacilli</taxon>
        <taxon>Bacillales</taxon>
        <taxon>Bacillales Family XII. Incertae Sedis</taxon>
        <taxon>Exiguobacterium</taxon>
    </lineage>
</organism>
<evidence type="ECO:0000255" key="1">
    <source>
        <dbReference type="HAMAP-Rule" id="MF_01683"/>
    </source>
</evidence>
<name>MTNK_EXIS2</name>
<accession>B1YIY3</accession>
<gene>
    <name evidence="1" type="primary">mtnK</name>
    <name type="ordered locus">Exig_0431</name>
</gene>
<keyword id="KW-0028">Amino-acid biosynthesis</keyword>
<keyword id="KW-0067">ATP-binding</keyword>
<keyword id="KW-0418">Kinase</keyword>
<keyword id="KW-0486">Methionine biosynthesis</keyword>
<keyword id="KW-0547">Nucleotide-binding</keyword>
<keyword id="KW-1185">Reference proteome</keyword>
<keyword id="KW-0808">Transferase</keyword>
<comment type="function">
    <text evidence="1">Catalyzes the phosphorylation of methylthioribose into methylthioribose-1-phosphate.</text>
</comment>
<comment type="catalytic activity">
    <reaction evidence="1">
        <text>5-(methylsulfanyl)-D-ribose + ATP = 5-(methylsulfanyl)-alpha-D-ribose 1-phosphate + ADP + H(+)</text>
        <dbReference type="Rhea" id="RHEA:22312"/>
        <dbReference type="ChEBI" id="CHEBI:15378"/>
        <dbReference type="ChEBI" id="CHEBI:30616"/>
        <dbReference type="ChEBI" id="CHEBI:58533"/>
        <dbReference type="ChEBI" id="CHEBI:78440"/>
        <dbReference type="ChEBI" id="CHEBI:456216"/>
        <dbReference type="EC" id="2.7.1.100"/>
    </reaction>
</comment>
<comment type="pathway">
    <text evidence="1">Amino-acid biosynthesis; L-methionine biosynthesis via salvage pathway; S-methyl-5-thio-alpha-D-ribose 1-phosphate from S-methyl-5'-thioadenosine (hydrolase route): step 2/2.</text>
</comment>
<comment type="subunit">
    <text evidence="1">Homodimer.</text>
</comment>
<comment type="similarity">
    <text evidence="1">Belongs to the methylthioribose kinase family.</text>
</comment>
<dbReference type="EC" id="2.7.1.100" evidence="1"/>
<dbReference type="EMBL" id="CP001022">
    <property type="protein sequence ID" value="ACB59913.1"/>
    <property type="molecule type" value="Genomic_DNA"/>
</dbReference>
<dbReference type="RefSeq" id="WP_012369337.1">
    <property type="nucleotide sequence ID" value="NC_010556.1"/>
</dbReference>
<dbReference type="SMR" id="B1YIY3"/>
<dbReference type="STRING" id="262543.Exig_0431"/>
<dbReference type="KEGG" id="esi:Exig_0431"/>
<dbReference type="eggNOG" id="COG4857">
    <property type="taxonomic scope" value="Bacteria"/>
</dbReference>
<dbReference type="HOGENOM" id="CLU_033681_0_0_9"/>
<dbReference type="OrthoDB" id="9777791at2"/>
<dbReference type="UniPathway" id="UPA00904">
    <property type="reaction ID" value="UER00872"/>
</dbReference>
<dbReference type="Proteomes" id="UP000001681">
    <property type="component" value="Chromosome"/>
</dbReference>
<dbReference type="GO" id="GO:0005524">
    <property type="term" value="F:ATP binding"/>
    <property type="evidence" value="ECO:0007669"/>
    <property type="project" value="UniProtKB-UniRule"/>
</dbReference>
<dbReference type="GO" id="GO:0046522">
    <property type="term" value="F:S-methyl-5-thioribose kinase activity"/>
    <property type="evidence" value="ECO:0007669"/>
    <property type="project" value="UniProtKB-UniRule"/>
</dbReference>
<dbReference type="GO" id="GO:0019509">
    <property type="term" value="P:L-methionine salvage from methylthioadenosine"/>
    <property type="evidence" value="ECO:0007669"/>
    <property type="project" value="UniProtKB-UniRule"/>
</dbReference>
<dbReference type="Gene3D" id="3.90.1200.10">
    <property type="match status" value="1"/>
</dbReference>
<dbReference type="Gene3D" id="3.30.200.20">
    <property type="entry name" value="Phosphorylase Kinase, domain 1"/>
    <property type="match status" value="1"/>
</dbReference>
<dbReference type="HAMAP" id="MF_01683">
    <property type="entry name" value="Salvage_MtnK"/>
    <property type="match status" value="1"/>
</dbReference>
<dbReference type="InterPro" id="IPR002575">
    <property type="entry name" value="Aminoglycoside_PTrfase"/>
</dbReference>
<dbReference type="InterPro" id="IPR011009">
    <property type="entry name" value="Kinase-like_dom_sf"/>
</dbReference>
<dbReference type="InterPro" id="IPR009212">
    <property type="entry name" value="Methylthioribose_kinase"/>
</dbReference>
<dbReference type="NCBIfam" id="TIGR01767">
    <property type="entry name" value="MTRK"/>
    <property type="match status" value="1"/>
</dbReference>
<dbReference type="PANTHER" id="PTHR34273">
    <property type="entry name" value="METHYLTHIORIBOSE KINASE"/>
    <property type="match status" value="1"/>
</dbReference>
<dbReference type="PANTHER" id="PTHR34273:SF2">
    <property type="entry name" value="METHYLTHIORIBOSE KINASE"/>
    <property type="match status" value="1"/>
</dbReference>
<dbReference type="Pfam" id="PF01636">
    <property type="entry name" value="APH"/>
    <property type="match status" value="1"/>
</dbReference>
<dbReference type="PIRSF" id="PIRSF031134">
    <property type="entry name" value="MTRK"/>
    <property type="match status" value="1"/>
</dbReference>
<dbReference type="SUPFAM" id="SSF56112">
    <property type="entry name" value="Protein kinase-like (PK-like)"/>
    <property type="match status" value="1"/>
</dbReference>